<accession>P12498</accession>
<proteinExistence type="inferred from homology"/>
<organismHost>
    <name type="scientific">Homo sapiens</name>
    <name type="common">Human</name>
    <dbReference type="NCBI Taxonomy" id="9606"/>
</organismHost>
<reference key="1">
    <citation type="journal article" date="1989" name="AIDS Res. Hum. Retroviruses">
        <title>Nucleotide sequences of gag and env genes of a Japanese isolate of HIV-1 and their expression in bacteria.</title>
        <authorList>
            <person name="Komiyama N."/>
            <person name="Hattori N."/>
            <person name="Inoue J."/>
            <person name="Sakuma S."/>
            <person name="Kurimura T."/>
            <person name="Yoshida M."/>
        </authorList>
    </citation>
    <scope>NUCLEOTIDE SEQUENCE [GENOMIC RNA]</scope>
</reference>
<reference key="2">
    <citation type="journal article" date="1996" name="Curr. Top. Microbiol. Immunol.">
        <title>Proteolytic processing and particle maturation.</title>
        <authorList>
            <person name="Vogt V.M."/>
        </authorList>
    </citation>
    <scope>REVIEW</scope>
</reference>
<reference key="3">
    <citation type="journal article" date="1999" name="J. Mol. Biol.">
        <title>Structural biology of HIV.</title>
        <authorList>
            <person name="Turner B.G."/>
            <person name="Summers M.F."/>
        </authorList>
    </citation>
    <scope>REVIEW</scope>
</reference>
<reference key="4">
    <citation type="journal article" date="2001" name="Annu. Rev. Genet.">
        <title>Mechanisms of retroviral recombination.</title>
        <authorList>
            <person name="Negroni M."/>
            <person name="Buc H."/>
        </authorList>
    </citation>
    <scope>REVIEW</scope>
</reference>
<reference key="5">
    <citation type="journal article" date="2002" name="Genome Biol.">
        <title>Retroviral proteases.</title>
        <authorList>
            <person name="Dunn B.M."/>
            <person name="Goodenow M.M."/>
            <person name="Gustchina A."/>
            <person name="Wlodawer A."/>
        </authorList>
    </citation>
    <scope>REVIEW</scope>
</reference>
<reference key="6">
    <citation type="journal article" date="2003" name="Biochim. Biophys. Acta">
        <title>Role of HIV-1 Gag domains in viral assembly.</title>
        <authorList>
            <person name="Scarlata S."/>
            <person name="Carter C."/>
        </authorList>
    </citation>
    <scope>REVIEW</scope>
</reference>
<organism>
    <name type="scientific">Human immunodeficiency virus type 1 group M subtype B (isolate JH32)</name>
    <name type="common">HIV-1</name>
    <dbReference type="NCBI Taxonomy" id="11694"/>
    <lineage>
        <taxon>Viruses</taxon>
        <taxon>Riboviria</taxon>
        <taxon>Pararnavirae</taxon>
        <taxon>Artverviricota</taxon>
        <taxon>Revtraviricetes</taxon>
        <taxon>Ortervirales</taxon>
        <taxon>Retroviridae</taxon>
        <taxon>Orthoretrovirinae</taxon>
        <taxon>Lentivirus</taxon>
        <taxon>Human immunodeficiency virus type 1</taxon>
    </lineage>
</organism>
<protein>
    <recommendedName>
        <fullName>Gag-Pol polyprotein</fullName>
    </recommendedName>
    <alternativeName>
        <fullName>Pr160Gag-Pol</fullName>
    </alternativeName>
    <component>
        <recommendedName>
            <fullName>Matrix protein p17</fullName>
            <shortName>MA</shortName>
        </recommendedName>
    </component>
    <component>
        <recommendedName>
            <fullName>Capsid protein p24</fullName>
            <shortName>CA</shortName>
        </recommendedName>
    </component>
    <component>
        <recommendedName>
            <fullName evidence="5">Spacer peptide 1</fullName>
            <shortName>SP1</shortName>
        </recommendedName>
        <alternativeName>
            <fullName>p2</fullName>
        </alternativeName>
    </component>
    <component>
        <recommendedName>
            <fullName>Nucleocapsid protein p7</fullName>
            <shortName>NC</shortName>
        </recommendedName>
    </component>
    <component>
        <recommendedName>
            <fullName>Transframe peptide</fullName>
            <shortName>TF</shortName>
        </recommendedName>
    </component>
    <component>
        <recommendedName>
            <fullName>p6-pol</fullName>
            <shortName>p6*</shortName>
        </recommendedName>
    </component>
    <component>
        <recommendedName>
            <fullName>Protease</fullName>
            <ecNumber>3.4.23.16</ecNumber>
        </recommendedName>
        <alternativeName>
            <fullName>PR</fullName>
        </alternativeName>
        <alternativeName>
            <fullName>Retropepsin</fullName>
        </alternativeName>
    </component>
</protein>
<feature type="initiator methionine" description="Removed; by host" evidence="1">
    <location>
        <position position="1"/>
    </location>
</feature>
<feature type="chain" id="PRO_0000261268" description="Gag-Pol polyprotein">
    <location>
        <begin position="2"/>
        <end position="532" status="greater than"/>
    </location>
</feature>
<feature type="chain" id="PRO_0000042362" description="Matrix protein p17" evidence="1">
    <location>
        <begin position="2"/>
        <end position="132"/>
    </location>
</feature>
<feature type="chain" id="PRO_0000042363" description="Capsid protein p24" evidence="1">
    <location>
        <begin position="133"/>
        <end position="363"/>
    </location>
</feature>
<feature type="peptide" id="PRO_0000042364" description="Spacer peptide 1" evidence="1">
    <location>
        <begin position="364"/>
        <end position="377"/>
    </location>
</feature>
<feature type="chain" id="PRO_0000042365" description="Nucleocapsid protein p7" evidence="1">
    <location>
        <begin position="378"/>
        <end position="432"/>
    </location>
</feature>
<feature type="peptide" id="PRO_0000246717" description="Transframe peptide" evidence="6">
    <location>
        <begin position="433"/>
        <end position="440"/>
    </location>
</feature>
<feature type="chain" id="PRO_0000042366" description="p6-pol" evidence="6">
    <location>
        <begin position="441"/>
        <end position="488"/>
    </location>
</feature>
<feature type="chain" id="PRO_0000038656" description="Protease" evidence="1">
    <location>
        <begin position="489"/>
        <end position="532" status="greater than"/>
    </location>
</feature>
<feature type="domain" description="Peptidase A2" evidence="8">
    <location>
        <begin position="508"/>
        <end position="532" status="greater than"/>
    </location>
</feature>
<feature type="zinc finger region" description="CCHC-type 1" evidence="7">
    <location>
        <begin position="390"/>
        <end position="407"/>
    </location>
</feature>
<feature type="zinc finger region" description="CCHC-type 2" evidence="7">
    <location>
        <begin position="411"/>
        <end position="428"/>
    </location>
</feature>
<feature type="region of interest" description="Interaction with Gp41" evidence="5">
    <location>
        <begin position="7"/>
        <end position="31"/>
    </location>
</feature>
<feature type="region of interest" description="Interaction with host CALM1" evidence="3">
    <location>
        <begin position="8"/>
        <end position="43"/>
    </location>
</feature>
<feature type="region of interest" description="Interaction with host AP3D1" evidence="5">
    <location>
        <begin position="12"/>
        <end position="19"/>
    </location>
</feature>
<feature type="region of interest" description="Interaction with membrane phosphatidylinositol 4,5-bisphosphate and RNA" evidence="5">
    <location>
        <begin position="14"/>
        <end position="33"/>
    </location>
</feature>
<feature type="region of interest" description="Interaction with membrane phosphatidylinositol 4,5-bisphosphate" evidence="5">
    <location>
        <begin position="73"/>
        <end position="77"/>
    </location>
</feature>
<feature type="region of interest" description="Disordered" evidence="10">
    <location>
        <begin position="106"/>
        <end position="127"/>
    </location>
</feature>
<feature type="region of interest" description="Interaction with human PPIA/CYPA and NUP153" evidence="5">
    <location>
        <begin position="189"/>
        <end position="227"/>
    </location>
</feature>
<feature type="region of interest" description="Dimerization/Multimerization of capsid protein p24" evidence="3">
    <location>
        <begin position="277"/>
        <end position="363"/>
    </location>
</feature>
<feature type="region of interest" description="Disordered" evidence="10">
    <location>
        <begin position="447"/>
        <end position="481"/>
    </location>
</feature>
<feature type="region of interest" description="Dimerization of protease" evidence="3">
    <location>
        <begin position="489"/>
        <end position="493"/>
    </location>
</feature>
<feature type="short sequence motif" description="Nuclear export signal" evidence="1">
    <location>
        <begin position="16"/>
        <end position="22"/>
    </location>
</feature>
<feature type="short sequence motif" description="Nuclear localization signal" evidence="1">
    <location>
        <begin position="26"/>
        <end position="32"/>
    </location>
</feature>
<feature type="compositionally biased region" description="Polar residues" evidence="10">
    <location>
        <begin position="450"/>
        <end position="459"/>
    </location>
</feature>
<feature type="active site" description="For protease activity; shared with dimeric partner" evidence="9">
    <location>
        <position position="513"/>
    </location>
</feature>
<feature type="site" description="Cleavage; by viral protease" evidence="1">
    <location>
        <begin position="132"/>
        <end position="133"/>
    </location>
</feature>
<feature type="site" description="Cis/trans isomerization of proline peptide bond; by human PPIA/CYPA" evidence="1">
    <location>
        <begin position="221"/>
        <end position="222"/>
    </location>
</feature>
<feature type="site" description="Cleavage; by viral protease" evidence="1">
    <location>
        <begin position="363"/>
        <end position="364"/>
    </location>
</feature>
<feature type="site" description="Cleavage; by viral protease" evidence="1">
    <location>
        <begin position="377"/>
        <end position="378"/>
    </location>
</feature>
<feature type="site" description="Cleavage; by viral protease" evidence="6">
    <location>
        <begin position="432"/>
        <end position="433"/>
    </location>
</feature>
<feature type="site" description="Cleavage; by viral protease" evidence="1">
    <location>
        <begin position="440"/>
        <end position="441"/>
    </location>
</feature>
<feature type="site" description="Cleavage; by viral protease" evidence="1">
    <location>
        <begin position="488"/>
        <end position="489"/>
    </location>
</feature>
<feature type="modified residue" description="Phosphotyrosine; by host" evidence="1">
    <location>
        <position position="132"/>
    </location>
</feature>
<feature type="lipid moiety-binding region" description="N-myristoyl glycine; by host" evidence="1">
    <location>
        <position position="2"/>
    </location>
</feature>
<feature type="non-terminal residue">
    <location>
        <position position="532"/>
    </location>
</feature>
<dbReference type="EC" id="3.4.23.16"/>
<dbReference type="EMBL" id="AH003604">
    <property type="protein sequence ID" value="AAB03523.1"/>
    <property type="status" value="ALT_SEQ"/>
    <property type="molecule type" value="Genomic_RNA"/>
</dbReference>
<dbReference type="SMR" id="P12498"/>
<dbReference type="MEROPS" id="A02.001"/>
<dbReference type="PRO" id="PR:P12498"/>
<dbReference type="GO" id="GO:0042025">
    <property type="term" value="C:host cell nucleus"/>
    <property type="evidence" value="ECO:0007669"/>
    <property type="project" value="UniProtKB-SubCell"/>
</dbReference>
<dbReference type="GO" id="GO:0020002">
    <property type="term" value="C:host cell plasma membrane"/>
    <property type="evidence" value="ECO:0007669"/>
    <property type="project" value="UniProtKB-SubCell"/>
</dbReference>
<dbReference type="GO" id="GO:0072494">
    <property type="term" value="C:host multivesicular body"/>
    <property type="evidence" value="ECO:0007669"/>
    <property type="project" value="UniProtKB-SubCell"/>
</dbReference>
<dbReference type="GO" id="GO:0016020">
    <property type="term" value="C:membrane"/>
    <property type="evidence" value="ECO:0007669"/>
    <property type="project" value="UniProtKB-KW"/>
</dbReference>
<dbReference type="GO" id="GO:0019013">
    <property type="term" value="C:viral nucleocapsid"/>
    <property type="evidence" value="ECO:0007669"/>
    <property type="project" value="UniProtKB-KW"/>
</dbReference>
<dbReference type="GO" id="GO:0055036">
    <property type="term" value="C:virion membrane"/>
    <property type="evidence" value="ECO:0007669"/>
    <property type="project" value="UniProtKB-SubCell"/>
</dbReference>
<dbReference type="GO" id="GO:0004190">
    <property type="term" value="F:aspartic-type endopeptidase activity"/>
    <property type="evidence" value="ECO:0007669"/>
    <property type="project" value="UniProtKB-KW"/>
</dbReference>
<dbReference type="GO" id="GO:0008289">
    <property type="term" value="F:lipid binding"/>
    <property type="evidence" value="ECO:0007669"/>
    <property type="project" value="UniProtKB-KW"/>
</dbReference>
<dbReference type="GO" id="GO:0003723">
    <property type="term" value="F:RNA binding"/>
    <property type="evidence" value="ECO:0007669"/>
    <property type="project" value="UniProtKB-KW"/>
</dbReference>
<dbReference type="GO" id="GO:0005198">
    <property type="term" value="F:structural molecule activity"/>
    <property type="evidence" value="ECO:0007669"/>
    <property type="project" value="InterPro"/>
</dbReference>
<dbReference type="GO" id="GO:0008270">
    <property type="term" value="F:zinc ion binding"/>
    <property type="evidence" value="ECO:0007669"/>
    <property type="project" value="UniProtKB-KW"/>
</dbReference>
<dbReference type="GO" id="GO:0006508">
    <property type="term" value="P:proteolysis"/>
    <property type="evidence" value="ECO:0007669"/>
    <property type="project" value="UniProtKB-KW"/>
</dbReference>
<dbReference type="GO" id="GO:0039657">
    <property type="term" value="P:symbiont-mediated suppression of host gene expression"/>
    <property type="evidence" value="ECO:0007669"/>
    <property type="project" value="UniProtKB-KW"/>
</dbReference>
<dbReference type="GO" id="GO:0075523">
    <property type="term" value="P:viral translational frameshifting"/>
    <property type="evidence" value="ECO:0007669"/>
    <property type="project" value="UniProtKB-KW"/>
</dbReference>
<dbReference type="FunFam" id="1.10.1200.30:FF:000001">
    <property type="entry name" value="Gag polyprotein"/>
    <property type="match status" value="1"/>
</dbReference>
<dbReference type="FunFam" id="1.10.150.90:FF:000001">
    <property type="entry name" value="Gag polyprotein"/>
    <property type="match status" value="1"/>
</dbReference>
<dbReference type="FunFam" id="1.10.375.10:FF:000001">
    <property type="entry name" value="Gag polyprotein"/>
    <property type="match status" value="1"/>
</dbReference>
<dbReference type="FunFam" id="1.20.5.760:FF:000001">
    <property type="entry name" value="Gag polyprotein"/>
    <property type="match status" value="1"/>
</dbReference>
<dbReference type="FunFam" id="4.10.60.10:FF:000001">
    <property type="entry name" value="Gag polyprotein"/>
    <property type="match status" value="1"/>
</dbReference>
<dbReference type="Gene3D" id="1.10.1200.30">
    <property type="match status" value="1"/>
</dbReference>
<dbReference type="Gene3D" id="2.40.70.10">
    <property type="entry name" value="Acid Proteases"/>
    <property type="match status" value="1"/>
</dbReference>
<dbReference type="Gene3D" id="1.10.375.10">
    <property type="entry name" value="Human Immunodeficiency Virus Type 1 Capsid Protein"/>
    <property type="match status" value="1"/>
</dbReference>
<dbReference type="Gene3D" id="1.10.150.90">
    <property type="entry name" value="Immunodeficiency lentiviruses, gag gene matrix protein p17"/>
    <property type="match status" value="1"/>
</dbReference>
<dbReference type="Gene3D" id="1.20.5.760">
    <property type="entry name" value="Single helix bin"/>
    <property type="match status" value="1"/>
</dbReference>
<dbReference type="Gene3D" id="4.10.60.10">
    <property type="entry name" value="Zinc finger, CCHC-type"/>
    <property type="match status" value="1"/>
</dbReference>
<dbReference type="InterPro" id="IPR001969">
    <property type="entry name" value="Aspartic_peptidase_AS"/>
</dbReference>
<dbReference type="InterPro" id="IPR045345">
    <property type="entry name" value="Gag_p24_C"/>
</dbReference>
<dbReference type="InterPro" id="IPR000071">
    <property type="entry name" value="Lentvrl_matrix_N"/>
</dbReference>
<dbReference type="InterPro" id="IPR012344">
    <property type="entry name" value="Matrix_HIV/RSV_N"/>
</dbReference>
<dbReference type="InterPro" id="IPR001995">
    <property type="entry name" value="Peptidase_A2_cat"/>
</dbReference>
<dbReference type="InterPro" id="IPR021109">
    <property type="entry name" value="Peptidase_aspartic_dom_sf"/>
</dbReference>
<dbReference type="InterPro" id="IPR050195">
    <property type="entry name" value="Primate_lentivir_Gag_pol-like"/>
</dbReference>
<dbReference type="InterPro" id="IPR018061">
    <property type="entry name" value="Retropepsins"/>
</dbReference>
<dbReference type="InterPro" id="IPR008916">
    <property type="entry name" value="Retrov_capsid_C"/>
</dbReference>
<dbReference type="InterPro" id="IPR008919">
    <property type="entry name" value="Retrov_capsid_N"/>
</dbReference>
<dbReference type="InterPro" id="IPR010999">
    <property type="entry name" value="Retrovr_matrix"/>
</dbReference>
<dbReference type="InterPro" id="IPR001878">
    <property type="entry name" value="Znf_CCHC"/>
</dbReference>
<dbReference type="InterPro" id="IPR036875">
    <property type="entry name" value="Znf_CCHC_sf"/>
</dbReference>
<dbReference type="PANTHER" id="PTHR40389">
    <property type="entry name" value="ENDOGENOUS RETROVIRUS GROUP K MEMBER 24 GAG POLYPROTEIN-RELATED"/>
    <property type="match status" value="1"/>
</dbReference>
<dbReference type="PANTHER" id="PTHR40389:SF2">
    <property type="entry name" value="ENDOGENOUS RETROVIRUS GROUP K MEMBER 24 GAG POLYPROTEIN-RELATED"/>
    <property type="match status" value="1"/>
</dbReference>
<dbReference type="Pfam" id="PF00540">
    <property type="entry name" value="Gag_p17"/>
    <property type="match status" value="1"/>
</dbReference>
<dbReference type="Pfam" id="PF00607">
    <property type="entry name" value="Gag_p24"/>
    <property type="match status" value="1"/>
</dbReference>
<dbReference type="Pfam" id="PF19317">
    <property type="entry name" value="Gag_p24_C"/>
    <property type="match status" value="1"/>
</dbReference>
<dbReference type="Pfam" id="PF00077">
    <property type="entry name" value="RVP"/>
    <property type="match status" value="1"/>
</dbReference>
<dbReference type="Pfam" id="PF00098">
    <property type="entry name" value="zf-CCHC"/>
    <property type="match status" value="2"/>
</dbReference>
<dbReference type="PRINTS" id="PR00234">
    <property type="entry name" value="HIV1MATRIX"/>
</dbReference>
<dbReference type="SMART" id="SM00343">
    <property type="entry name" value="ZnF_C2HC"/>
    <property type="match status" value="2"/>
</dbReference>
<dbReference type="SUPFAM" id="SSF50630">
    <property type="entry name" value="Acid proteases"/>
    <property type="match status" value="1"/>
</dbReference>
<dbReference type="SUPFAM" id="SSF47836">
    <property type="entry name" value="Retroviral matrix proteins"/>
    <property type="match status" value="1"/>
</dbReference>
<dbReference type="SUPFAM" id="SSF47353">
    <property type="entry name" value="Retrovirus capsid dimerization domain-like"/>
    <property type="match status" value="1"/>
</dbReference>
<dbReference type="SUPFAM" id="SSF47943">
    <property type="entry name" value="Retrovirus capsid protein, N-terminal core domain"/>
    <property type="match status" value="1"/>
</dbReference>
<dbReference type="SUPFAM" id="SSF57756">
    <property type="entry name" value="Retrovirus zinc finger-like domains"/>
    <property type="match status" value="1"/>
</dbReference>
<dbReference type="PROSITE" id="PS50175">
    <property type="entry name" value="ASP_PROT_RETROV"/>
    <property type="match status" value="1"/>
</dbReference>
<dbReference type="PROSITE" id="PS00141">
    <property type="entry name" value="ASP_PROTEASE"/>
    <property type="match status" value="1"/>
</dbReference>
<dbReference type="PROSITE" id="PS50158">
    <property type="entry name" value="ZF_CCHC"/>
    <property type="match status" value="2"/>
</dbReference>
<name>POL_HV1J3</name>
<evidence type="ECO:0000250" key="1"/>
<evidence type="ECO:0000250" key="2">
    <source>
        <dbReference type="UniProtKB" id="P03347"/>
    </source>
</evidence>
<evidence type="ECO:0000250" key="3">
    <source>
        <dbReference type="UniProtKB" id="P04585"/>
    </source>
</evidence>
<evidence type="ECO:0000250" key="4">
    <source>
        <dbReference type="UniProtKB" id="P12493"/>
    </source>
</evidence>
<evidence type="ECO:0000250" key="5">
    <source>
        <dbReference type="UniProtKB" id="P12497"/>
    </source>
</evidence>
<evidence type="ECO:0000255" key="6"/>
<evidence type="ECO:0000255" key="7">
    <source>
        <dbReference type="PROSITE-ProRule" id="PRU00047"/>
    </source>
</evidence>
<evidence type="ECO:0000255" key="8">
    <source>
        <dbReference type="PROSITE-ProRule" id="PRU00275"/>
    </source>
</evidence>
<evidence type="ECO:0000255" key="9">
    <source>
        <dbReference type="PROSITE-ProRule" id="PRU10094"/>
    </source>
</evidence>
<evidence type="ECO:0000256" key="10">
    <source>
        <dbReference type="SAM" id="MobiDB-lite"/>
    </source>
</evidence>
<evidence type="ECO:0000305" key="11"/>
<sequence length="532" mass="59412">MGARASVLSGGELDRWEKIRLRPGGKKKYKLKHIVWASRELERFAVNPSLLETSEGCRQILGQLQPSLQTGSEELKSLFNTVATLYCVHQRIEVKDTKEALEKIEEEQNKSKKKAQQAAADTGNSSKVSQNYPIVQNIQGQMVHQAISPRTLNAWVKVVEEKAFSPEVIPMFSALSEGATPQDLNTMLNTVGGHQAAMQMLKETINEEAAEWDRLHPAQAGPIAPGQMREPRGSDIAGTTSTLQEQIGWMTSNPPIPVGEIYKRWIILGLNKIVRMYSPSSILDIRQGPKEPFRDYVDRFYKTLRAEQASQEVKNWMTETLLVQNANPDCKTILKALGPAATLEEMMTACQGVGGPGHKARVLAEAMSQVTNSTTIMMQRGNFRNQRKIIKCFNCGKEGHLARNCRAPRKKGCWKCGKEGHQMKDCNERQANFLREDLAFLQGKAREFSSEQTRANSPSRGELQVWGRDNNPLSEAGAERQGTVSFSFPQITLWQRPLVTLKIGGQLKEALLDTGADDTVLEEMNSPGRWKP</sequence>
<keyword id="KW-0014">AIDS</keyword>
<keyword id="KW-0064">Aspartyl protease</keyword>
<keyword id="KW-0167">Capsid protein</keyword>
<keyword id="KW-1262">Eukaryotic host gene expression shutoff by virus</keyword>
<keyword id="KW-1193">Eukaryotic host translation shutoff by virus</keyword>
<keyword id="KW-1032">Host cell membrane</keyword>
<keyword id="KW-1035">Host cytoplasm</keyword>
<keyword id="KW-1039">Host endosome</keyword>
<keyword id="KW-1190">Host gene expression shutoff by virus</keyword>
<keyword id="KW-1043">Host membrane</keyword>
<keyword id="KW-1048">Host nucleus</keyword>
<keyword id="KW-0945">Host-virus interaction</keyword>
<keyword id="KW-0378">Hydrolase</keyword>
<keyword id="KW-0446">Lipid-binding</keyword>
<keyword id="KW-0449">Lipoprotein</keyword>
<keyword id="KW-0472">Membrane</keyword>
<keyword id="KW-0479">Metal-binding</keyword>
<keyword id="KW-0519">Myristate</keyword>
<keyword id="KW-0597">Phosphoprotein</keyword>
<keyword id="KW-0645">Protease</keyword>
<keyword id="KW-0677">Repeat</keyword>
<keyword id="KW-0688">Ribosomal frameshifting</keyword>
<keyword id="KW-0694">RNA-binding</keyword>
<keyword id="KW-0543">Viral nucleoprotein</keyword>
<keyword id="KW-1188">Viral release from host cell</keyword>
<keyword id="KW-0946">Virion</keyword>
<keyword id="KW-0917">Virion maturation</keyword>
<keyword id="KW-0862">Zinc</keyword>
<keyword id="KW-0863">Zinc-finger</keyword>
<gene>
    <name type="primary">gag-pol</name>
</gene>
<comment type="function">
    <molecule>Gag-Pol polyprotein</molecule>
    <text evidence="1">Mediates, with Gag polyprotein, the essential events in virion assembly, including binding the plasma membrane, making the protein-protein interactions necessary to create spherical particles, recruiting the viral Env proteins, and packaging the genomic RNA via direct interactions with the RNA packaging sequence (Psi). Gag-Pol polyprotein may regulate its own translation, by the binding genomic RNA in the 5'-UTR. At low concentration, the polyprotein would promote translation, whereas at high concentration, the polyprotein would encapsidate genomic RNA and then shut off translation.</text>
</comment>
<comment type="function">
    <molecule>Matrix protein p17</molecule>
    <text evidence="5">Targets the polyprotein to the plasma membrane via a multipartite membrane-binding signal, that includes its myristoylated N-terminus. Matrix protein is part of the pre-integration complex. Implicated in the release from host cell mediated by Vpu. Binds to RNA.</text>
</comment>
<comment type="function">
    <molecule>Capsid protein p24</molecule>
    <text evidence="3 5">Forms the conical core that encapsulates the genomic RNA-nucleocapsid complex in the virion. Most core are conical, with only 7% tubular. The core is constituted by capsid protein hexamer subunits. The core is disassembled soon after virion entry (By similarity). Host restriction factors such as TRIM5-alpha or TRIMCyp bind retroviral capsids and cause premature capsid disassembly, leading to blocks in reverse transcription. Capsid restriction by TRIM5 is one of the factors which restricts HIV-1 to the human species. Host PIN1 apparently facilitates the virion uncoating. On the other hand, interactions with PDZD8 or CYPA stabilize the capsid.</text>
</comment>
<comment type="function">
    <molecule>Nucleocapsid protein p7</molecule>
    <text evidence="3">Encapsulates and protects viral dimeric unspliced genomic RNA (gRNA). Binds these RNAs through its zinc fingers. Acts as a nucleic acid chaperone which is involved in rearangement of nucleic acid secondary structure during gRNA retrotranscription. Also facilitates template switch leading to recombination. As part of the polyprotein, participates in gRNA dimerization, packaging, tRNA incorporation and virion assembly.</text>
</comment>
<comment type="function">
    <molecule>Protease</molecule>
    <text evidence="3 8">Aspartyl protease that mediates proteolytic cleavages of Gag and Gag-Pol polyproteins during or shortly after the release of the virion from the plasma membrane. Cleavages take place as an ordered, step-wise cascade to yield mature proteins. This process is called maturation. Displays maximal activity during the budding process just prior to particle release from the cell. Also cleaves Nef and Vif, probably concomitantly with viral structural proteins on maturation of virus particles. Hydrolyzes host EIF4GI and PABP1 in order to shut off the capped cellular mRNA translation. The resulting inhibition of cellular protein synthesis serves to ensure maximal viral gene expression and to evade host immune response. Also mediates cleavage of host YTHDF3. Mediates cleavage of host CARD8, thereby activating the CARD8 inflammasome, leading to the clearance of latent HIV-1 in patient CD4(+) T-cells after viral reactivation; in contrast, HIV-1 can evade CARD8-sensing when its protease remains inactive in infected cells prior to viral budding (By similarity).</text>
</comment>
<comment type="catalytic activity">
    <reaction evidence="8">
        <text>Specific for a P1 residue that is hydrophobic, and P1' variable, but often Pro.</text>
        <dbReference type="EC" id="3.4.23.16"/>
    </reaction>
</comment>
<comment type="activity regulation">
    <molecule>Protease</molecule>
    <text evidence="1">The viral protease is inhibited by many synthetic protease inhibitors (PIs), such as amprenavir, atazanavir, indinavir, loprinavir, nelfinavir, ritonavir and saquinavir. Use of protease inhibitors in tritherapy regimens permit more ambitious therapeutic strategies.</text>
</comment>
<comment type="subunit">
    <molecule>Matrix protein p17</molecule>
    <text evidence="3 5">Homotrimer; further assembles as hexamers of trimers (By similarity). Interacts with gp41 (via C-terminus) (By similarity). Interacts with host CALM1; this interaction induces a conformational change in the Matrix protein, triggering exposure of the myristate group (By similarity). Interacts with host AP3D1; this interaction allows the polyprotein trafficking to multivesicular bodies during virus assembly (By similarity). Part of the pre-integration complex (PIC) which is composed of viral genome, matrix protein, Vpr and integrase (By similarity).</text>
</comment>
<comment type="subunit">
    <molecule>Capsid protein p24</molecule>
    <text evidence="3 5">Homodimer; the homodimer further multimerizes as homohexamers or homopentamers. Interacts with human PPIA/CYPA (By similarity); This interaction stabilizes the capsid. Interacts with human NUP153 (By similarity). Interacts with host PDZD8; this interaction stabilizes the capsid (By similarity). Interacts with monkey TRIM5; this interaction destabilizes the capsid (By similarity).</text>
</comment>
<comment type="subunit">
    <molecule>Protease</molecule>
    <text evidence="3 5">Homodimer, whose active site consists of two apposed aspartic acid residues.</text>
</comment>
<comment type="subcellular location">
    <molecule>Gag-Pol polyprotein</molecule>
    <subcellularLocation>
        <location>Host cell membrane</location>
        <topology>Lipid-anchor</topology>
    </subcellularLocation>
    <subcellularLocation>
        <location>Host endosome</location>
        <location>Host multivesicular body</location>
    </subcellularLocation>
    <text evidence="5">These locations are linked to virus assembly sites. The main location is the cell membrane, but under some circumstances, late endosomal compartments can serve as productive sites for virion assembly.</text>
</comment>
<comment type="subcellular location">
    <molecule>Matrix protein p17</molecule>
    <subcellularLocation>
        <location>Virion membrane</location>
        <topology evidence="11">Lipid-anchor</topology>
    </subcellularLocation>
    <subcellularLocation>
        <location evidence="1">Host nucleus</location>
    </subcellularLocation>
    <subcellularLocation>
        <location evidence="1">Host cytoplasm</location>
    </subcellularLocation>
</comment>
<comment type="subcellular location">
    <molecule>Capsid protein p24</molecule>
    <subcellularLocation>
        <location evidence="11">Virion</location>
    </subcellularLocation>
</comment>
<comment type="subcellular location">
    <molecule>Nucleocapsid protein p7</molecule>
    <subcellularLocation>
        <location evidence="11">Virion</location>
    </subcellularLocation>
</comment>
<comment type="alternative products">
    <event type="ribosomal frameshifting"/>
    <isoform>
        <id>P12498-1</id>
        <name>Gag-Pol polyprotein</name>
        <sequence type="displayed"/>
    </isoform>
    <isoform>
        <id>P12494-1</id>
        <name>Gag polyprotein</name>
        <sequence type="external"/>
    </isoform>
    <text>Translation results in the formation of the Gag polyprotein most of the time. Ribosomal frameshifting at the gag-pol genes boundary occurs at low frequency and produces the Gag-Pol polyprotein. This strategy of translation probably allows the virus to modulate the quantity of each viral protein. Maintenance of a correct Gag to Gag-Pol ratio is essential for RNA dimerization and viral infectivity.</text>
</comment>
<comment type="PTM">
    <text evidence="1">Specific enzymatic cleavages by the viral protease yield mature proteins. The protease is released by autocatalytic cleavage. The polyprotein is cleaved during and after budding, this process is termed maturation. Proteolytic cleavage of p66 RT removes the RNase H domain to yield the p51 RT subunit. Nucleocapsid protein p7 might be further cleaved after virus entry (By similarity).</text>
</comment>
<comment type="PTM">
    <molecule>Matrix protein p17</molecule>
    <text evidence="3">Tyrosine phosphorylated presumably in the virion by a host kinase. Phosphorylation is apparently not a major regulator of membrane association.</text>
</comment>
<comment type="PTM">
    <molecule>Capsid protein p24</molecule>
    <text evidence="4">Phosphorylated possibly by host MAPK1; this phosphorylation is necessary for Pin1-mediated virion uncoating.</text>
</comment>
<comment type="PTM">
    <molecule>Nucleocapsid protein p7</molecule>
    <text evidence="2">Methylated by host PRMT6, impairing its function by reducing RNA annealing and the initiation of reverse transcription.</text>
</comment>
<comment type="miscellaneous">
    <text>HIV-1 lineages are divided in three main groups, M (for Major), O (for Outlier), and N (for New, or Non-M, Non-O). The vast majority of strains found worldwide belong to the group M. Group O seems to be endemic to and largely confined to Cameroon and neighboring countries in West Central Africa, where these viruses represent a small minority of HIV-1 strains. The group N is represented by a limited number of isolates from Cameroonian persons. The group M is further subdivided in 9 clades or subtypes (A to D, F to H, J and K).</text>
</comment>
<comment type="miscellaneous">
    <text>Resistance to inhibitors associated with mutations are observed both in viral protease and in reverse transcriptase. Most of the time, single mutations confer only a modest reduction in drug susceptibility. Combination of several mutations is usually required to develop a high-level drug resistance. These mutations are predominantly found in clade B viruses and not in other genotypes. They are listed in the clade B representative isolate HXB2 (AC P04585).</text>
</comment>
<comment type="miscellaneous">
    <molecule>Isoform Gag-Pol polyprotein</molecule>
    <text>Produced by -1 ribosomal frameshifting.</text>
</comment>
<comment type="sequence caution">
    <conflict type="miscellaneous discrepancy">
        <sequence resource="EMBL-CDS" id="AAB03523"/>
    </conflict>
</comment>
<comment type="online information" name="HIV drug resistance mutations">
    <link uri="https://www.iasusa.org/hiv-drug-resistance/hiv-drug-resistance-mutations/"/>
</comment>
<comment type="online information" name="hivdb">
    <link uri="https://hivdb.stanford.edu"/>
    <text>HIV drug resistance database</text>
</comment>